<comment type="function">
    <text evidence="1">One of the early assembly proteins it binds 23S rRNA. One of the proteins that surrounds the polypeptide exit tunnel on the outside of the ribosome. Forms the main docking site for trigger factor binding to the ribosome.</text>
</comment>
<comment type="subunit">
    <text evidence="1">Part of the 50S ribosomal subunit. Contacts protein L29, and trigger factor when it is bound to the ribosome.</text>
</comment>
<comment type="similarity">
    <text evidence="1">Belongs to the universal ribosomal protein uL23 family.</text>
</comment>
<feature type="chain" id="PRO_1000215028" description="Large ribosomal subunit protein uL23">
    <location>
        <begin position="1"/>
        <end position="95"/>
    </location>
</feature>
<name>RL23_DEIDV</name>
<gene>
    <name evidence="1" type="primary">rplW</name>
    <name type="ordered locus">Deide_18930</name>
</gene>
<accession>C1CXG4</accession>
<reference key="1">
    <citation type="journal article" date="2009" name="PLoS Genet.">
        <title>Alliance of proteomics and genomics to unravel the specificities of Sahara bacterium Deinococcus deserti.</title>
        <authorList>
            <person name="de Groot A."/>
            <person name="Dulermo R."/>
            <person name="Ortet P."/>
            <person name="Blanchard L."/>
            <person name="Guerin P."/>
            <person name="Fernandez B."/>
            <person name="Vacherie B."/>
            <person name="Dossat C."/>
            <person name="Jolivet E."/>
            <person name="Siguier P."/>
            <person name="Chandler M."/>
            <person name="Barakat M."/>
            <person name="Dedieu A."/>
            <person name="Barbe V."/>
            <person name="Heulin T."/>
            <person name="Sommer S."/>
            <person name="Achouak W."/>
            <person name="Armengaud J."/>
        </authorList>
    </citation>
    <scope>NUCLEOTIDE SEQUENCE [LARGE SCALE GENOMIC DNA]</scope>
    <source>
        <strain>DSM 17065 / CIP 109153 / LMG 22923 / VCD115</strain>
    </source>
</reference>
<proteinExistence type="inferred from homology"/>
<organism>
    <name type="scientific">Deinococcus deserti (strain DSM 17065 / CIP 109153 / LMG 22923 / VCD115)</name>
    <dbReference type="NCBI Taxonomy" id="546414"/>
    <lineage>
        <taxon>Bacteria</taxon>
        <taxon>Thermotogati</taxon>
        <taxon>Deinococcota</taxon>
        <taxon>Deinococci</taxon>
        <taxon>Deinococcales</taxon>
        <taxon>Deinococcaceae</taxon>
        <taxon>Deinococcus</taxon>
    </lineage>
</organism>
<evidence type="ECO:0000255" key="1">
    <source>
        <dbReference type="HAMAP-Rule" id="MF_01369"/>
    </source>
</evidence>
<evidence type="ECO:0000305" key="2"/>
<dbReference type="EMBL" id="CP001114">
    <property type="protein sequence ID" value="ACO46881.1"/>
    <property type="molecule type" value="Genomic_DNA"/>
</dbReference>
<dbReference type="RefSeq" id="WP_012694003.1">
    <property type="nucleotide sequence ID" value="NC_012526.1"/>
</dbReference>
<dbReference type="SMR" id="C1CXG4"/>
<dbReference type="STRING" id="546414.Deide_18930"/>
<dbReference type="PaxDb" id="546414-Deide_18930"/>
<dbReference type="KEGG" id="ddr:Deide_18930"/>
<dbReference type="eggNOG" id="COG0089">
    <property type="taxonomic scope" value="Bacteria"/>
</dbReference>
<dbReference type="HOGENOM" id="CLU_037562_3_1_0"/>
<dbReference type="OrthoDB" id="9793353at2"/>
<dbReference type="Proteomes" id="UP000002208">
    <property type="component" value="Chromosome"/>
</dbReference>
<dbReference type="GO" id="GO:1990904">
    <property type="term" value="C:ribonucleoprotein complex"/>
    <property type="evidence" value="ECO:0007669"/>
    <property type="project" value="UniProtKB-KW"/>
</dbReference>
<dbReference type="GO" id="GO:0005840">
    <property type="term" value="C:ribosome"/>
    <property type="evidence" value="ECO:0007669"/>
    <property type="project" value="UniProtKB-KW"/>
</dbReference>
<dbReference type="GO" id="GO:0019843">
    <property type="term" value="F:rRNA binding"/>
    <property type="evidence" value="ECO:0007669"/>
    <property type="project" value="UniProtKB-UniRule"/>
</dbReference>
<dbReference type="GO" id="GO:0003735">
    <property type="term" value="F:structural constituent of ribosome"/>
    <property type="evidence" value="ECO:0007669"/>
    <property type="project" value="InterPro"/>
</dbReference>
<dbReference type="GO" id="GO:0006412">
    <property type="term" value="P:translation"/>
    <property type="evidence" value="ECO:0007669"/>
    <property type="project" value="UniProtKB-UniRule"/>
</dbReference>
<dbReference type="FunFam" id="3.30.70.330:FF:000001">
    <property type="entry name" value="50S ribosomal protein L23"/>
    <property type="match status" value="1"/>
</dbReference>
<dbReference type="Gene3D" id="3.30.70.330">
    <property type="match status" value="1"/>
</dbReference>
<dbReference type="HAMAP" id="MF_01369_B">
    <property type="entry name" value="Ribosomal_uL23_B"/>
    <property type="match status" value="1"/>
</dbReference>
<dbReference type="InterPro" id="IPR012677">
    <property type="entry name" value="Nucleotide-bd_a/b_plait_sf"/>
</dbReference>
<dbReference type="InterPro" id="IPR013025">
    <property type="entry name" value="Ribosomal_uL23-like"/>
</dbReference>
<dbReference type="InterPro" id="IPR012678">
    <property type="entry name" value="Ribosomal_uL23/eL15/eS24_sf"/>
</dbReference>
<dbReference type="InterPro" id="IPR001014">
    <property type="entry name" value="Ribosomal_uL23_CS"/>
</dbReference>
<dbReference type="NCBIfam" id="NF004363">
    <property type="entry name" value="PRK05738.2-4"/>
    <property type="match status" value="1"/>
</dbReference>
<dbReference type="NCBIfam" id="NF004366">
    <property type="entry name" value="PRK05738.3-2"/>
    <property type="match status" value="1"/>
</dbReference>
<dbReference type="PANTHER" id="PTHR11620">
    <property type="entry name" value="60S RIBOSOMAL PROTEIN L23A"/>
    <property type="match status" value="1"/>
</dbReference>
<dbReference type="Pfam" id="PF00276">
    <property type="entry name" value="Ribosomal_L23"/>
    <property type="match status" value="1"/>
</dbReference>
<dbReference type="SUPFAM" id="SSF54189">
    <property type="entry name" value="Ribosomal proteins S24e, L23 and L15e"/>
    <property type="match status" value="1"/>
</dbReference>
<dbReference type="PROSITE" id="PS00050">
    <property type="entry name" value="RIBOSOMAL_L23"/>
    <property type="match status" value="1"/>
</dbReference>
<protein>
    <recommendedName>
        <fullName evidence="1">Large ribosomal subunit protein uL23</fullName>
    </recommendedName>
    <alternativeName>
        <fullName evidence="2">50S ribosomal protein L23</fullName>
    </alternativeName>
</protein>
<keyword id="KW-1185">Reference proteome</keyword>
<keyword id="KW-0687">Ribonucleoprotein</keyword>
<keyword id="KW-0689">Ribosomal protein</keyword>
<keyword id="KW-0694">RNA-binding</keyword>
<keyword id="KW-0699">rRNA-binding</keyword>
<sequence>MSHYDIIHKPVISEKAYAGMERGVYSFWVSPNATKTDIKSAIQKAFDVTVVGISTMNVRGKRKRVGRFIGQRADRKKAIVRLAEGQTIAALEGQA</sequence>